<gene>
    <name evidence="1" type="primary">ybiX</name>
    <name type="ordered locus">EcolC_2839</name>
</gene>
<protein>
    <recommendedName>
        <fullName evidence="1">PKHD-type hydroxylase YbiX</fullName>
        <ecNumber evidence="1">1.14.11.-</ecNumber>
    </recommendedName>
</protein>
<accession>B1IXG4</accession>
<name>YBIX_ECOLC</name>
<keyword id="KW-0223">Dioxygenase</keyword>
<keyword id="KW-0408">Iron</keyword>
<keyword id="KW-0479">Metal-binding</keyword>
<keyword id="KW-0560">Oxidoreductase</keyword>
<keyword id="KW-0847">Vitamin C</keyword>
<dbReference type="EC" id="1.14.11.-" evidence="1"/>
<dbReference type="EMBL" id="CP000946">
    <property type="protein sequence ID" value="ACA78467.1"/>
    <property type="molecule type" value="Genomic_DNA"/>
</dbReference>
<dbReference type="RefSeq" id="WP_000990177.1">
    <property type="nucleotide sequence ID" value="NZ_MTFT01000003.1"/>
</dbReference>
<dbReference type="SMR" id="B1IXG4"/>
<dbReference type="KEGG" id="ecl:EcolC_2839"/>
<dbReference type="HOGENOM" id="CLU_106663_0_0_6"/>
<dbReference type="GO" id="GO:0016706">
    <property type="term" value="F:2-oxoglutarate-dependent dioxygenase activity"/>
    <property type="evidence" value="ECO:0007669"/>
    <property type="project" value="UniProtKB-UniRule"/>
</dbReference>
<dbReference type="GO" id="GO:0005506">
    <property type="term" value="F:iron ion binding"/>
    <property type="evidence" value="ECO:0007669"/>
    <property type="project" value="UniProtKB-UniRule"/>
</dbReference>
<dbReference type="GO" id="GO:0031418">
    <property type="term" value="F:L-ascorbic acid binding"/>
    <property type="evidence" value="ECO:0007669"/>
    <property type="project" value="UniProtKB-KW"/>
</dbReference>
<dbReference type="GO" id="GO:0006974">
    <property type="term" value="P:DNA damage response"/>
    <property type="evidence" value="ECO:0007669"/>
    <property type="project" value="TreeGrafter"/>
</dbReference>
<dbReference type="GO" id="GO:0006879">
    <property type="term" value="P:intracellular iron ion homeostasis"/>
    <property type="evidence" value="ECO:0007669"/>
    <property type="project" value="TreeGrafter"/>
</dbReference>
<dbReference type="FunFam" id="2.60.120.620:FF:000006">
    <property type="entry name" value="PKHD-type hydroxylase YbiX"/>
    <property type="match status" value="1"/>
</dbReference>
<dbReference type="FunFam" id="4.10.860.20:FF:000001">
    <property type="entry name" value="PKHD-type hydroxylase YbiX"/>
    <property type="match status" value="1"/>
</dbReference>
<dbReference type="Gene3D" id="2.60.120.620">
    <property type="entry name" value="q2cbj1_9rhob like domain"/>
    <property type="match status" value="1"/>
</dbReference>
<dbReference type="Gene3D" id="4.10.860.20">
    <property type="entry name" value="Rabenosyn, Rab binding domain"/>
    <property type="match status" value="1"/>
</dbReference>
<dbReference type="HAMAP" id="MF_00657">
    <property type="entry name" value="Hydroxyl_YbiX"/>
    <property type="match status" value="1"/>
</dbReference>
<dbReference type="InterPro" id="IPR005123">
    <property type="entry name" value="Oxoglu/Fe-dep_dioxygenase_dom"/>
</dbReference>
<dbReference type="InterPro" id="IPR041097">
    <property type="entry name" value="PKHD_C"/>
</dbReference>
<dbReference type="InterPro" id="IPR023550">
    <property type="entry name" value="PKHD_hydroxylase"/>
</dbReference>
<dbReference type="InterPro" id="IPR006620">
    <property type="entry name" value="Pro_4_hyd_alph"/>
</dbReference>
<dbReference type="InterPro" id="IPR044862">
    <property type="entry name" value="Pro_4_hyd_alph_FE2OG_OXY"/>
</dbReference>
<dbReference type="NCBIfam" id="NF003972">
    <property type="entry name" value="PRK05467.1-1"/>
    <property type="match status" value="1"/>
</dbReference>
<dbReference type="NCBIfam" id="NF003974">
    <property type="entry name" value="PRK05467.1-3"/>
    <property type="match status" value="1"/>
</dbReference>
<dbReference type="NCBIfam" id="NF003975">
    <property type="entry name" value="PRK05467.1-4"/>
    <property type="match status" value="1"/>
</dbReference>
<dbReference type="PANTHER" id="PTHR41536">
    <property type="entry name" value="PKHD-TYPE HYDROXYLASE YBIX"/>
    <property type="match status" value="1"/>
</dbReference>
<dbReference type="PANTHER" id="PTHR41536:SF1">
    <property type="entry name" value="PKHD-TYPE HYDROXYLASE YBIX"/>
    <property type="match status" value="1"/>
</dbReference>
<dbReference type="Pfam" id="PF13640">
    <property type="entry name" value="2OG-FeII_Oxy_3"/>
    <property type="match status" value="1"/>
</dbReference>
<dbReference type="Pfam" id="PF18331">
    <property type="entry name" value="PKHD_C"/>
    <property type="match status" value="1"/>
</dbReference>
<dbReference type="SMART" id="SM00702">
    <property type="entry name" value="P4Hc"/>
    <property type="match status" value="1"/>
</dbReference>
<dbReference type="SUPFAM" id="SSF51197">
    <property type="entry name" value="Clavaminate synthase-like"/>
    <property type="match status" value="1"/>
</dbReference>
<dbReference type="PROSITE" id="PS51471">
    <property type="entry name" value="FE2OG_OXY"/>
    <property type="match status" value="1"/>
</dbReference>
<comment type="cofactor">
    <cofactor evidence="1">
        <name>Fe(2+)</name>
        <dbReference type="ChEBI" id="CHEBI:29033"/>
    </cofactor>
    <text evidence="1">Binds 1 Fe(2+) ion per subunit.</text>
</comment>
<comment type="cofactor">
    <cofactor evidence="1">
        <name>L-ascorbate</name>
        <dbReference type="ChEBI" id="CHEBI:38290"/>
    </cofactor>
</comment>
<reference key="1">
    <citation type="submission" date="2008-02" db="EMBL/GenBank/DDBJ databases">
        <title>Complete sequence of Escherichia coli C str. ATCC 8739.</title>
        <authorList>
            <person name="Copeland A."/>
            <person name="Lucas S."/>
            <person name="Lapidus A."/>
            <person name="Glavina del Rio T."/>
            <person name="Dalin E."/>
            <person name="Tice H."/>
            <person name="Bruce D."/>
            <person name="Goodwin L."/>
            <person name="Pitluck S."/>
            <person name="Kiss H."/>
            <person name="Brettin T."/>
            <person name="Detter J.C."/>
            <person name="Han C."/>
            <person name="Kuske C.R."/>
            <person name="Schmutz J."/>
            <person name="Larimer F."/>
            <person name="Land M."/>
            <person name="Hauser L."/>
            <person name="Kyrpides N."/>
            <person name="Mikhailova N."/>
            <person name="Ingram L."/>
            <person name="Richardson P."/>
        </authorList>
    </citation>
    <scope>NUCLEOTIDE SEQUENCE [LARGE SCALE GENOMIC DNA]</scope>
    <source>
        <strain>ATCC 8739 / DSM 1576 / NBRC 3972 / NCIMB 8545 / WDCM 00012 / Crooks</strain>
    </source>
</reference>
<proteinExistence type="inferred from homology"/>
<feature type="chain" id="PRO_1000082789" description="PKHD-type hydroxylase YbiX">
    <location>
        <begin position="1"/>
        <end position="225"/>
    </location>
</feature>
<feature type="domain" description="Fe2OG dioxygenase" evidence="1">
    <location>
        <begin position="78"/>
        <end position="177"/>
    </location>
</feature>
<feature type="binding site" evidence="1">
    <location>
        <position position="96"/>
    </location>
    <ligand>
        <name>Fe cation</name>
        <dbReference type="ChEBI" id="CHEBI:24875"/>
    </ligand>
</feature>
<feature type="binding site" evidence="1">
    <location>
        <position position="98"/>
    </location>
    <ligand>
        <name>Fe cation</name>
        <dbReference type="ChEBI" id="CHEBI:24875"/>
    </ligand>
</feature>
<feature type="binding site" evidence="1">
    <location>
        <position position="158"/>
    </location>
    <ligand>
        <name>Fe cation</name>
        <dbReference type="ChEBI" id="CHEBI:24875"/>
    </ligand>
</feature>
<feature type="binding site" evidence="1">
    <location>
        <position position="168"/>
    </location>
    <ligand>
        <name>2-oxoglutarate</name>
        <dbReference type="ChEBI" id="CHEBI:16810"/>
    </ligand>
</feature>
<organism>
    <name type="scientific">Escherichia coli (strain ATCC 8739 / DSM 1576 / NBRC 3972 / NCIMB 8545 / WDCM 00012 / Crooks)</name>
    <dbReference type="NCBI Taxonomy" id="481805"/>
    <lineage>
        <taxon>Bacteria</taxon>
        <taxon>Pseudomonadati</taxon>
        <taxon>Pseudomonadota</taxon>
        <taxon>Gammaproteobacteria</taxon>
        <taxon>Enterobacterales</taxon>
        <taxon>Enterobacteriaceae</taxon>
        <taxon>Escherichia</taxon>
    </lineage>
</organism>
<sequence length="225" mass="25529">MMYHIPGVLSPQDVARFREQLEQAEWVDGRVTTGAQGAQVKNNQQVDTRSTLYAALQNEVLNAVNQHALFFAAALPRTLSTPLFNRYQNNETYGFHVDGAVRSHPQNGWMRTDLSATLFLSDPQSYDGGELVVNDTFGQHRVKLPAGDLVLYPSSSLHCVTPVTRGVRVASFMWIQSMIRDDKKRAMLFELDNNIQSLKSRYGESEEILSLLNLYHNLLREWSEI</sequence>
<evidence type="ECO:0000255" key="1">
    <source>
        <dbReference type="HAMAP-Rule" id="MF_00657"/>
    </source>
</evidence>